<organism>
    <name type="scientific">Eubacterium cellulosolvens (strain ATCC 43171 / JCM 9499 / 6)</name>
    <name type="common">Cillobacterium cellulosolvens</name>
    <dbReference type="NCBI Taxonomy" id="633697"/>
    <lineage>
        <taxon>Bacteria</taxon>
        <taxon>Bacillati</taxon>
        <taxon>Bacillota</taxon>
        <taxon>Clostridia</taxon>
        <taxon>Eubacteriales</taxon>
        <taxon>Eubacteriaceae</taxon>
        <taxon>Eubacterium</taxon>
    </lineage>
</organism>
<gene>
    <name evidence="3" type="primary">dfgB</name>
    <name evidence="6" type="ORF">EubceDRAFT1_2663</name>
</gene>
<dbReference type="EC" id="4.1.99.-" evidence="2"/>
<dbReference type="EMBL" id="CM001487">
    <property type="protein sequence ID" value="EIM58372.1"/>
    <property type="molecule type" value="Genomic_DNA"/>
</dbReference>
<dbReference type="PDB" id="7BVS">
    <property type="method" value="X-ray"/>
    <property type="resolution" value="2.85 A"/>
    <property type="chains" value="B=1-147"/>
</dbReference>
<dbReference type="PDB" id="7DRE">
    <property type="method" value="EM"/>
    <property type="resolution" value="2.54 A"/>
    <property type="chains" value="B/D/F/H=1-147"/>
</dbReference>
<dbReference type="PDB" id="7EXB">
    <property type="method" value="X-ray"/>
    <property type="resolution" value="2.40 A"/>
    <property type="chains" value="B=1-147"/>
</dbReference>
<dbReference type="PDBsum" id="7BVS"/>
<dbReference type="PDBsum" id="7DRE"/>
<dbReference type="PDBsum" id="7EXB"/>
<dbReference type="SMR" id="I5AX49"/>
<dbReference type="STRING" id="633697.EubceDRAFT1_2663"/>
<dbReference type="eggNOG" id="COG1082">
    <property type="taxonomic scope" value="Bacteria"/>
</dbReference>
<dbReference type="HOGENOM" id="CLU_144091_0_0_9"/>
<dbReference type="OrthoDB" id="1956341at2"/>
<dbReference type="BioCyc" id="MetaCyc:MONOMER-124418"/>
<dbReference type="Proteomes" id="UP000005753">
    <property type="component" value="Chromosome"/>
</dbReference>
<dbReference type="GO" id="GO:0016829">
    <property type="term" value="F:lyase activity"/>
    <property type="evidence" value="ECO:0007669"/>
    <property type="project" value="UniProtKB-KW"/>
</dbReference>
<dbReference type="InterPro" id="IPR045959">
    <property type="entry name" value="CGDB"/>
</dbReference>
<dbReference type="Pfam" id="PF19906">
    <property type="entry name" value="CGDB"/>
    <property type="match status" value="1"/>
</dbReference>
<evidence type="ECO:0000269" key="1">
    <source>
    </source>
</evidence>
<evidence type="ECO:0000269" key="2">
    <source>
    </source>
</evidence>
<evidence type="ECO:0000303" key="3">
    <source>
    </source>
</evidence>
<evidence type="ECO:0000303" key="4">
    <source>
    </source>
</evidence>
<evidence type="ECO:0000305" key="5"/>
<evidence type="ECO:0000312" key="6">
    <source>
        <dbReference type="EMBL" id="EIM58372.1"/>
    </source>
</evidence>
<evidence type="ECO:0007744" key="7">
    <source>
        <dbReference type="PDB" id="7BVS"/>
    </source>
</evidence>
<evidence type="ECO:0007744" key="8">
    <source>
        <dbReference type="PDB" id="7DRE"/>
    </source>
</evidence>
<evidence type="ECO:0007744" key="9">
    <source>
        <dbReference type="PDB" id="7EXB"/>
    </source>
</evidence>
<evidence type="ECO:0007829" key="10">
    <source>
        <dbReference type="PDB" id="7EXB"/>
    </source>
</evidence>
<protein>
    <recommendedName>
        <fullName evidence="4">C-glycoside deglycosidase beta subunit</fullName>
        <shortName evidence="4">CGD beta subunit</shortName>
        <ecNumber evidence="2">4.1.99.-</ecNumber>
    </recommendedName>
    <alternativeName>
        <fullName evidence="4">C-deglycosylation enzyme beta subunit</fullName>
    </alternativeName>
    <alternativeName>
        <fullName evidence="4">EuCGD beta</fullName>
    </alternativeName>
</protein>
<name>CGDB_EUBC6</name>
<accession>I5AX49</accession>
<proteinExistence type="evidence at protein level"/>
<feature type="chain" id="PRO_0000461030" description="C-glycoside deglycosidase beta subunit">
    <location>
        <begin position="1"/>
        <end position="147"/>
    </location>
</feature>
<feature type="strand" evidence="10">
    <location>
        <begin position="3"/>
        <end position="6"/>
    </location>
</feature>
<feature type="strand" evidence="10">
    <location>
        <begin position="12"/>
        <end position="14"/>
    </location>
</feature>
<feature type="strand" evidence="10">
    <location>
        <begin position="17"/>
        <end position="19"/>
    </location>
</feature>
<feature type="strand" evidence="10">
    <location>
        <begin position="23"/>
        <end position="28"/>
    </location>
</feature>
<feature type="strand" evidence="10">
    <location>
        <begin position="32"/>
        <end position="34"/>
    </location>
</feature>
<feature type="helix" evidence="10">
    <location>
        <begin position="38"/>
        <end position="40"/>
    </location>
</feature>
<feature type="strand" evidence="10">
    <location>
        <begin position="41"/>
        <end position="48"/>
    </location>
</feature>
<feature type="strand" evidence="10">
    <location>
        <begin position="51"/>
        <end position="53"/>
    </location>
</feature>
<feature type="helix" evidence="10">
    <location>
        <begin position="55"/>
        <end position="57"/>
    </location>
</feature>
<feature type="strand" evidence="10">
    <location>
        <begin position="58"/>
        <end position="62"/>
    </location>
</feature>
<feature type="strand" evidence="10">
    <location>
        <begin position="65"/>
        <end position="67"/>
    </location>
</feature>
<feature type="helix" evidence="10">
    <location>
        <begin position="69"/>
        <end position="74"/>
    </location>
</feature>
<feature type="strand" evidence="10">
    <location>
        <begin position="76"/>
        <end position="80"/>
    </location>
</feature>
<feature type="strand" evidence="10">
    <location>
        <begin position="86"/>
        <end position="91"/>
    </location>
</feature>
<feature type="strand" evidence="10">
    <location>
        <begin position="98"/>
        <end position="109"/>
    </location>
</feature>
<feature type="helix" evidence="10">
    <location>
        <begin position="116"/>
        <end position="119"/>
    </location>
</feature>
<feature type="helix" evidence="10">
    <location>
        <begin position="133"/>
        <end position="135"/>
    </location>
</feature>
<feature type="strand" evidence="10">
    <location>
        <begin position="138"/>
        <end position="146"/>
    </location>
</feature>
<sequence length="147" mass="16909">MEKQVIQSVGFRNIKNGNGEITGFQFKVKLPYYRGVFLSQIRPGTLFVDGQKIEKDQITWTINGEEYTNQEMRGDFKTHWATTKPAVLKVKMPGGLAQGYHDLKYGFCFTSSYMPPIIQDGLDPDKESMVYMPEFGHHVNERRLLIV</sequence>
<keyword id="KW-0002">3D-structure</keyword>
<keyword id="KW-0119">Carbohydrate metabolism</keyword>
<keyword id="KW-0456">Lyase</keyword>
<keyword id="KW-0464">Manganese</keyword>
<keyword id="KW-1185">Reference proteome</keyword>
<reference key="1">
    <citation type="submission" date="2012-02" db="EMBL/GenBank/DDBJ databases">
        <title>Improved High-Quality Draft sequence of Eubacterium cellulosolvens 6.</title>
        <authorList>
            <consortium name="US DOE Joint Genome Institute"/>
            <person name="Lucas S."/>
            <person name="Han J."/>
            <person name="Lapidus A."/>
            <person name="Cheng J.-F."/>
            <person name="Goodwin L."/>
            <person name="Pitluck S."/>
            <person name="Peters L."/>
            <person name="Mikhailova N."/>
            <person name="Gu W."/>
            <person name="Detter J.C."/>
            <person name="Han C."/>
            <person name="Tapia R."/>
            <person name="Land M."/>
            <person name="Hauser L."/>
            <person name="Kyrpides N."/>
            <person name="Ivanova N."/>
            <person name="Pagani I."/>
            <person name="Johnson E."/>
            <person name="Mukhopadhyay B."/>
            <person name="Anderson I."/>
            <person name="Woyke T."/>
        </authorList>
    </citation>
    <scope>NUCLEOTIDE SEQUENCE [LARGE SCALE GENOMIC DNA]</scope>
    <source>
        <strain>ATCC 43171 / JCM 9499 / 6</strain>
    </source>
</reference>
<reference key="2">
    <citation type="journal article" date="2016" name="Environ. Microbiol.">
        <title>Identification and functional expression of genes encoding flavonoid O- and C-glycosidases in intestinal bacteria.</title>
        <authorList>
            <person name="Braune A."/>
            <person name="Engst W."/>
            <person name="Blaut M."/>
        </authorList>
    </citation>
    <scope>FUNCTION</scope>
    <source>
        <strain>ATCC 43171 / JCM 9499 / 6</strain>
    </source>
</reference>
<reference evidence="7 8 9" key="3">
    <citation type="journal article" date="2021" name="Nat. Commun.">
        <title>C-Glycoside metabolism in the gut and in nature: Identification, characterization, structural analyses and distribution of C-C bond-cleaving enzymes.</title>
        <authorList>
            <person name="Mori T."/>
            <person name="Kumano T."/>
            <person name="He H."/>
            <person name="Watanabe S."/>
            <person name="Senda M."/>
            <person name="Moriya T."/>
            <person name="Adachi N."/>
            <person name="Hori S."/>
            <person name="Terashita Y."/>
            <person name="Kawasaki M."/>
            <person name="Hashimoto Y."/>
            <person name="Awakawa T."/>
            <person name="Senda T."/>
            <person name="Abe I."/>
            <person name="Kobayashi M."/>
        </authorList>
    </citation>
    <scope>X-RAY CRYSTALLOGRAPHY (2.40 ANGSTROMS) IN COMPLEX WITH DFGA AND MN(2+)</scope>
    <scope>FUNCTION</scope>
    <scope>CATALYTIC ACTIVITY</scope>
    <scope>COFACTOR</scope>
    <scope>ACTIVITY REGULATION</scope>
    <scope>BIOPHYSICOCHEMICAL PROPERTIES</scope>
    <scope>SUBUNIT</scope>
</reference>
<comment type="function">
    <text evidence="1 2">Carbon-carbon bond-cleaving enzyme which participates in the metabolism of C-glycosides (PubMed:25845411, PubMed:34728636). Acts on the C6-glycosylated compounds 3''-dehydroisoorientin (3''-oxo-homoorientin) and 3''-dehydroisovitexin (3''-oxo-isovitexin) (PubMed:34728636).</text>
</comment>
<comment type="catalytic activity">
    <reaction evidence="2">
        <text>3''-dehydroisoorientin = 1,5-anhydro-D-erythro-hex-1-en-3-ulose + luteolin</text>
        <dbReference type="Rhea" id="RHEA:78771"/>
        <dbReference type="ChEBI" id="CHEBI:57545"/>
        <dbReference type="ChEBI" id="CHEBI:194218"/>
        <dbReference type="ChEBI" id="CHEBI:195275"/>
    </reaction>
</comment>
<comment type="catalytic activity">
    <reaction evidence="2">
        <text>3''-dehydroisovitexin = 1,5-anhydro-D-erythro-hex-1-en-3-ulose + apigenin</text>
        <dbReference type="Rhea" id="RHEA:78775"/>
        <dbReference type="ChEBI" id="CHEBI:58470"/>
        <dbReference type="ChEBI" id="CHEBI:194219"/>
        <dbReference type="ChEBI" id="CHEBI:195275"/>
    </reaction>
</comment>
<comment type="cofactor">
    <cofactor evidence="2">
        <name>Mn(2+)</name>
        <dbReference type="ChEBI" id="CHEBI:29035"/>
    </cofactor>
    <text evidence="2">Can also use other divalent ions such as Ni(2+), Mg(2+), Zn(2+) and Ca(2+), but Mn(2+) is probably the native metal ion.</text>
</comment>
<comment type="activity regulation">
    <text evidence="2">Activity is strongly reduced in the presence of chelating agents.</text>
</comment>
<comment type="biophysicochemical properties">
    <kinetics>
        <KM evidence="2">11 mM for 3''-dehydroisoorientin</KM>
        <KM evidence="2">3.6 mM for 3''-dehydroisovitexin</KM>
        <text evidence="2">kcat is 0.27 min(-1) with 3''-dehydroisoorientin as substrate. kcat is 0.18 min(-1) with 3''-dehydroisovitexin as substrate.</text>
    </kinetics>
    <phDependence>
        <text evidence="2">Optimum pH is 6.0.</text>
    </phDependence>
    <temperatureDependence>
        <text evidence="2">Optimum temperature is 60 degrees Celsius.</text>
    </temperatureDependence>
</comment>
<comment type="subunit">
    <text evidence="2">Heterooctamer composed of four alpha subunits (DfgA) and four beta subunits (DfgB).</text>
</comment>
<comment type="similarity">
    <text evidence="5">Belongs to the C-glycoside deglycosidase beta subunit family.</text>
</comment>